<reference key="1">
    <citation type="submission" date="2008-02" db="EMBL/GenBank/DDBJ databases">
        <title>Complete sequence of chromosome of Methylobacterium sp. 4-46.</title>
        <authorList>
            <consortium name="US DOE Joint Genome Institute"/>
            <person name="Copeland A."/>
            <person name="Lucas S."/>
            <person name="Lapidus A."/>
            <person name="Glavina del Rio T."/>
            <person name="Dalin E."/>
            <person name="Tice H."/>
            <person name="Bruce D."/>
            <person name="Goodwin L."/>
            <person name="Pitluck S."/>
            <person name="Chertkov O."/>
            <person name="Brettin T."/>
            <person name="Detter J.C."/>
            <person name="Han C."/>
            <person name="Kuske C.R."/>
            <person name="Schmutz J."/>
            <person name="Larimer F."/>
            <person name="Land M."/>
            <person name="Hauser L."/>
            <person name="Kyrpides N."/>
            <person name="Ivanova N."/>
            <person name="Marx C.J."/>
            <person name="Richardson P."/>
        </authorList>
    </citation>
    <scope>NUCLEOTIDE SEQUENCE [LARGE SCALE GENOMIC DNA]</scope>
    <source>
        <strain>4-46</strain>
    </source>
</reference>
<sequence>MLQPKKTKFRKQFKGRIHGTAKGGTDLNFGSYGLKALEPERVTARQIEAARRAITREMKRQGRVWIRIFPDVPVTQKPTEVRMGSGKGSPEYWAARVHPGRVMFEIDGVAEDIAREALRLGAAKLPVRTRFIQRIAD</sequence>
<accession>B0UHW2</accession>
<keyword id="KW-0687">Ribonucleoprotein</keyword>
<keyword id="KW-0689">Ribosomal protein</keyword>
<keyword id="KW-0694">RNA-binding</keyword>
<keyword id="KW-0699">rRNA-binding</keyword>
<keyword id="KW-0820">tRNA-binding</keyword>
<dbReference type="EMBL" id="CP000943">
    <property type="protein sequence ID" value="ACA14917.1"/>
    <property type="molecule type" value="Genomic_DNA"/>
</dbReference>
<dbReference type="RefSeq" id="WP_012330335.1">
    <property type="nucleotide sequence ID" value="NC_010511.1"/>
</dbReference>
<dbReference type="SMR" id="B0UHW2"/>
<dbReference type="STRING" id="426117.M446_0346"/>
<dbReference type="KEGG" id="met:M446_0346"/>
<dbReference type="eggNOG" id="COG0197">
    <property type="taxonomic scope" value="Bacteria"/>
</dbReference>
<dbReference type="HOGENOM" id="CLU_078858_2_1_5"/>
<dbReference type="GO" id="GO:0022625">
    <property type="term" value="C:cytosolic large ribosomal subunit"/>
    <property type="evidence" value="ECO:0007669"/>
    <property type="project" value="TreeGrafter"/>
</dbReference>
<dbReference type="GO" id="GO:0019843">
    <property type="term" value="F:rRNA binding"/>
    <property type="evidence" value="ECO:0007669"/>
    <property type="project" value="UniProtKB-UniRule"/>
</dbReference>
<dbReference type="GO" id="GO:0003735">
    <property type="term" value="F:structural constituent of ribosome"/>
    <property type="evidence" value="ECO:0007669"/>
    <property type="project" value="InterPro"/>
</dbReference>
<dbReference type="GO" id="GO:0000049">
    <property type="term" value="F:tRNA binding"/>
    <property type="evidence" value="ECO:0007669"/>
    <property type="project" value="UniProtKB-KW"/>
</dbReference>
<dbReference type="GO" id="GO:0006412">
    <property type="term" value="P:translation"/>
    <property type="evidence" value="ECO:0007669"/>
    <property type="project" value="UniProtKB-UniRule"/>
</dbReference>
<dbReference type="CDD" id="cd01433">
    <property type="entry name" value="Ribosomal_L16_L10e"/>
    <property type="match status" value="1"/>
</dbReference>
<dbReference type="FunFam" id="3.90.1170.10:FF:000001">
    <property type="entry name" value="50S ribosomal protein L16"/>
    <property type="match status" value="1"/>
</dbReference>
<dbReference type="Gene3D" id="3.90.1170.10">
    <property type="entry name" value="Ribosomal protein L10e/L16"/>
    <property type="match status" value="1"/>
</dbReference>
<dbReference type="HAMAP" id="MF_01342">
    <property type="entry name" value="Ribosomal_uL16"/>
    <property type="match status" value="1"/>
</dbReference>
<dbReference type="InterPro" id="IPR047873">
    <property type="entry name" value="Ribosomal_uL16"/>
</dbReference>
<dbReference type="InterPro" id="IPR000114">
    <property type="entry name" value="Ribosomal_uL16_bact-type"/>
</dbReference>
<dbReference type="InterPro" id="IPR020798">
    <property type="entry name" value="Ribosomal_uL16_CS"/>
</dbReference>
<dbReference type="InterPro" id="IPR016180">
    <property type="entry name" value="Ribosomal_uL16_dom"/>
</dbReference>
<dbReference type="InterPro" id="IPR036920">
    <property type="entry name" value="Ribosomal_uL16_sf"/>
</dbReference>
<dbReference type="NCBIfam" id="TIGR01164">
    <property type="entry name" value="rplP_bact"/>
    <property type="match status" value="1"/>
</dbReference>
<dbReference type="PANTHER" id="PTHR12220">
    <property type="entry name" value="50S/60S RIBOSOMAL PROTEIN L16"/>
    <property type="match status" value="1"/>
</dbReference>
<dbReference type="PANTHER" id="PTHR12220:SF13">
    <property type="entry name" value="LARGE RIBOSOMAL SUBUNIT PROTEIN UL16M"/>
    <property type="match status" value="1"/>
</dbReference>
<dbReference type="Pfam" id="PF00252">
    <property type="entry name" value="Ribosomal_L16"/>
    <property type="match status" value="1"/>
</dbReference>
<dbReference type="PRINTS" id="PR00060">
    <property type="entry name" value="RIBOSOMALL16"/>
</dbReference>
<dbReference type="SUPFAM" id="SSF54686">
    <property type="entry name" value="Ribosomal protein L16p/L10e"/>
    <property type="match status" value="1"/>
</dbReference>
<dbReference type="PROSITE" id="PS00586">
    <property type="entry name" value="RIBOSOMAL_L16_1"/>
    <property type="match status" value="1"/>
</dbReference>
<dbReference type="PROSITE" id="PS00701">
    <property type="entry name" value="RIBOSOMAL_L16_2"/>
    <property type="match status" value="1"/>
</dbReference>
<protein>
    <recommendedName>
        <fullName evidence="1">Large ribosomal subunit protein uL16</fullName>
    </recommendedName>
    <alternativeName>
        <fullName evidence="2">50S ribosomal protein L16</fullName>
    </alternativeName>
</protein>
<organism>
    <name type="scientific">Methylobacterium sp. (strain 4-46)</name>
    <dbReference type="NCBI Taxonomy" id="426117"/>
    <lineage>
        <taxon>Bacteria</taxon>
        <taxon>Pseudomonadati</taxon>
        <taxon>Pseudomonadota</taxon>
        <taxon>Alphaproteobacteria</taxon>
        <taxon>Hyphomicrobiales</taxon>
        <taxon>Methylobacteriaceae</taxon>
        <taxon>Methylobacterium</taxon>
    </lineage>
</organism>
<comment type="function">
    <text evidence="1">Binds 23S rRNA and is also seen to make contacts with the A and possibly P site tRNAs.</text>
</comment>
<comment type="subunit">
    <text evidence="1">Part of the 50S ribosomal subunit.</text>
</comment>
<comment type="similarity">
    <text evidence="1">Belongs to the universal ribosomal protein uL16 family.</text>
</comment>
<gene>
    <name evidence="1" type="primary">rplP</name>
    <name type="ordered locus">M446_0346</name>
</gene>
<name>RL16_METS4</name>
<proteinExistence type="inferred from homology"/>
<feature type="chain" id="PRO_1000142997" description="Large ribosomal subunit protein uL16">
    <location>
        <begin position="1"/>
        <end position="137"/>
    </location>
</feature>
<evidence type="ECO:0000255" key="1">
    <source>
        <dbReference type="HAMAP-Rule" id="MF_01342"/>
    </source>
</evidence>
<evidence type="ECO:0000305" key="2"/>